<keyword id="KW-0067">ATP-binding</keyword>
<keyword id="KW-0997">Cell inner membrane</keyword>
<keyword id="KW-1003">Cell membrane</keyword>
<keyword id="KW-0963">Cytoplasm</keyword>
<keyword id="KW-0472">Membrane</keyword>
<keyword id="KW-0479">Metal-binding</keyword>
<keyword id="KW-0547">Nucleotide-binding</keyword>
<keyword id="KW-0653">Protein transport</keyword>
<keyword id="KW-1278">Translocase</keyword>
<keyword id="KW-0811">Translocation</keyword>
<keyword id="KW-0813">Transport</keyword>
<keyword id="KW-0862">Zinc</keyword>
<comment type="function">
    <text evidence="1">Part of the Sec protein translocase complex. Interacts with the SecYEG preprotein conducting channel. Has a central role in coupling the hydrolysis of ATP to the transfer of proteins into and across the cell membrane, serving both as a receptor for the preprotein-SecB complex and as an ATP-driven molecular motor driving the stepwise translocation of polypeptide chains across the membrane.</text>
</comment>
<comment type="catalytic activity">
    <reaction evidence="1">
        <text>ATP + H2O + cellular proteinSide 1 = ADP + phosphate + cellular proteinSide 2.</text>
        <dbReference type="EC" id="7.4.2.8"/>
    </reaction>
</comment>
<comment type="cofactor">
    <cofactor evidence="1">
        <name>Zn(2+)</name>
        <dbReference type="ChEBI" id="CHEBI:29105"/>
    </cofactor>
    <text evidence="1">May bind 1 zinc ion per subunit.</text>
</comment>
<comment type="subunit">
    <text evidence="1">Monomer and homodimer. Part of the essential Sec protein translocation apparatus which comprises SecA, SecYEG and auxiliary proteins SecDF-YajC and YidC.</text>
</comment>
<comment type="subcellular location">
    <subcellularLocation>
        <location evidence="1">Cell inner membrane</location>
        <topology evidence="1">Peripheral membrane protein</topology>
        <orientation evidence="1">Cytoplasmic side</orientation>
    </subcellularLocation>
    <subcellularLocation>
        <location evidence="1">Cytoplasm</location>
    </subcellularLocation>
    <text evidence="1">Distribution is 50-50.</text>
</comment>
<comment type="similarity">
    <text evidence="1">Belongs to the SecA family.</text>
</comment>
<evidence type="ECO:0000255" key="1">
    <source>
        <dbReference type="HAMAP-Rule" id="MF_01382"/>
    </source>
</evidence>
<evidence type="ECO:0000256" key="2">
    <source>
        <dbReference type="SAM" id="MobiDB-lite"/>
    </source>
</evidence>
<sequence length="908" mass="102728">MFGKLLTKVFGSRNDRTLKGLQKIVISINALEADYEKLTDEALKAKTAEFRERLAAGASLDSIMAEAFATVREASKRVFDMRHFDVQLLGGMVLDSNRIAEMRTGEGKTLTATLPAYLNALTGKGVHVITVNDYLARRDAENNRPLFEFLGLTVGINVAGLGQHEKKAAYNADITYGTNNEFGFDYLRDNMAFSPQERVQRPLHYALIDEVDSILIDEARTPLIISGAAEDSSELYIKINTLIPNLIRQDKEDTEEYVGEGDYSIDEKAKQVHFTERGQEKVENLLIERGMLAEGDSLYSAANISLLHHVNAALRAHTLFERDVDYIVQDNEVIIVDEHTGRTMPGRRWSEGLHQAVEAKEGVHIQNENQTLASITFQNYFRQYEKLAGMTGTADTEAFEFQHIYGLDTVVVPTNRPMVRKDMADLVYLTADEKYQAIIKDIKDCRERGQPVLVGTVSIEQSELLARLMVQEKIPHEVLNAKFHEREAEIVAQAGRTGSVTIATNMAGRGTDIVLGGNWNMEIDELDNPTAEQKAKIKADWQIRHDEVVAAGGLHILGTERHESRRIDNQLRGRAGRQGDAGSSRFYLSMEDSLMRIFASDRVSGMMKKLGMEEGEAIEHPWVSRAIENAQRKVEARNFDIRKQLLEFDDVANDQRQVVYAQRNELMDAESIEDTIQNIQDDVIGAVIDQYIPPQSVEELWDIPGLEQRLHQEFMLKLPIQEWLDKEDDLHEESLRERIITAWGDAYKAKEEMVGAQVLRQFEKAVMLQTLDGLWKEHLAAMDHLRQGIHLRGYAQKNPKQEYKRESFELFQQLLNTLKHDVISVLSKVQVQAQSDVEEMEARRREEDAKIQRDYQHAAAESLVGGGDEHEAVTAQAPMIRDGEKVGRNDPCPCGSGRKYKQCHGKLS</sequence>
<organism>
    <name type="scientific">Shewanella baltica (strain OS195)</name>
    <dbReference type="NCBI Taxonomy" id="399599"/>
    <lineage>
        <taxon>Bacteria</taxon>
        <taxon>Pseudomonadati</taxon>
        <taxon>Pseudomonadota</taxon>
        <taxon>Gammaproteobacteria</taxon>
        <taxon>Alteromonadales</taxon>
        <taxon>Shewanellaceae</taxon>
        <taxon>Shewanella</taxon>
    </lineage>
</organism>
<proteinExistence type="inferred from homology"/>
<feature type="chain" id="PRO_1000087331" description="Protein translocase subunit SecA">
    <location>
        <begin position="1"/>
        <end position="908"/>
    </location>
</feature>
<feature type="region of interest" description="Disordered" evidence="2">
    <location>
        <begin position="876"/>
        <end position="908"/>
    </location>
</feature>
<feature type="compositionally biased region" description="Basic residues" evidence="2">
    <location>
        <begin position="898"/>
        <end position="908"/>
    </location>
</feature>
<feature type="binding site" evidence="1">
    <location>
        <position position="87"/>
    </location>
    <ligand>
        <name>ATP</name>
        <dbReference type="ChEBI" id="CHEBI:30616"/>
    </ligand>
</feature>
<feature type="binding site" evidence="1">
    <location>
        <begin position="105"/>
        <end position="109"/>
    </location>
    <ligand>
        <name>ATP</name>
        <dbReference type="ChEBI" id="CHEBI:30616"/>
    </ligand>
</feature>
<feature type="binding site" evidence="1">
    <location>
        <position position="512"/>
    </location>
    <ligand>
        <name>ATP</name>
        <dbReference type="ChEBI" id="CHEBI:30616"/>
    </ligand>
</feature>
<feature type="binding site" evidence="1">
    <location>
        <position position="892"/>
    </location>
    <ligand>
        <name>Zn(2+)</name>
        <dbReference type="ChEBI" id="CHEBI:29105"/>
    </ligand>
</feature>
<feature type="binding site" evidence="1">
    <location>
        <position position="894"/>
    </location>
    <ligand>
        <name>Zn(2+)</name>
        <dbReference type="ChEBI" id="CHEBI:29105"/>
    </ligand>
</feature>
<feature type="binding site" evidence="1">
    <location>
        <position position="903"/>
    </location>
    <ligand>
        <name>Zn(2+)</name>
        <dbReference type="ChEBI" id="CHEBI:29105"/>
    </ligand>
</feature>
<feature type="binding site" evidence="1">
    <location>
        <position position="904"/>
    </location>
    <ligand>
        <name>Zn(2+)</name>
        <dbReference type="ChEBI" id="CHEBI:29105"/>
    </ligand>
</feature>
<protein>
    <recommendedName>
        <fullName evidence="1">Protein translocase subunit SecA</fullName>
        <ecNumber evidence="1">7.4.2.8</ecNumber>
    </recommendedName>
</protein>
<name>SECA_SHEB9</name>
<dbReference type="EC" id="7.4.2.8" evidence="1"/>
<dbReference type="EMBL" id="CP000891">
    <property type="protein sequence ID" value="ABX47602.1"/>
    <property type="molecule type" value="Genomic_DNA"/>
</dbReference>
<dbReference type="RefSeq" id="WP_011982229.1">
    <property type="nucleotide sequence ID" value="NC_009997.1"/>
</dbReference>
<dbReference type="SMR" id="A9KY37"/>
<dbReference type="GeneID" id="11770756"/>
<dbReference type="KEGG" id="sbn:Sbal195_0421"/>
<dbReference type="HOGENOM" id="CLU_005314_3_0_6"/>
<dbReference type="Proteomes" id="UP000000770">
    <property type="component" value="Chromosome"/>
</dbReference>
<dbReference type="GO" id="GO:0031522">
    <property type="term" value="C:cell envelope Sec protein transport complex"/>
    <property type="evidence" value="ECO:0007669"/>
    <property type="project" value="TreeGrafter"/>
</dbReference>
<dbReference type="GO" id="GO:0005829">
    <property type="term" value="C:cytosol"/>
    <property type="evidence" value="ECO:0007669"/>
    <property type="project" value="TreeGrafter"/>
</dbReference>
<dbReference type="GO" id="GO:0005886">
    <property type="term" value="C:plasma membrane"/>
    <property type="evidence" value="ECO:0007669"/>
    <property type="project" value="UniProtKB-SubCell"/>
</dbReference>
<dbReference type="GO" id="GO:0005524">
    <property type="term" value="F:ATP binding"/>
    <property type="evidence" value="ECO:0007669"/>
    <property type="project" value="UniProtKB-UniRule"/>
</dbReference>
<dbReference type="GO" id="GO:0046872">
    <property type="term" value="F:metal ion binding"/>
    <property type="evidence" value="ECO:0007669"/>
    <property type="project" value="UniProtKB-KW"/>
</dbReference>
<dbReference type="GO" id="GO:0008564">
    <property type="term" value="F:protein-exporting ATPase activity"/>
    <property type="evidence" value="ECO:0007669"/>
    <property type="project" value="UniProtKB-EC"/>
</dbReference>
<dbReference type="GO" id="GO:0065002">
    <property type="term" value="P:intracellular protein transmembrane transport"/>
    <property type="evidence" value="ECO:0007669"/>
    <property type="project" value="UniProtKB-UniRule"/>
</dbReference>
<dbReference type="GO" id="GO:0017038">
    <property type="term" value="P:protein import"/>
    <property type="evidence" value="ECO:0007669"/>
    <property type="project" value="InterPro"/>
</dbReference>
<dbReference type="GO" id="GO:0006605">
    <property type="term" value="P:protein targeting"/>
    <property type="evidence" value="ECO:0007669"/>
    <property type="project" value="UniProtKB-UniRule"/>
</dbReference>
<dbReference type="GO" id="GO:0043952">
    <property type="term" value="P:protein transport by the Sec complex"/>
    <property type="evidence" value="ECO:0007669"/>
    <property type="project" value="TreeGrafter"/>
</dbReference>
<dbReference type="CDD" id="cd17928">
    <property type="entry name" value="DEXDc_SecA"/>
    <property type="match status" value="1"/>
</dbReference>
<dbReference type="CDD" id="cd18803">
    <property type="entry name" value="SF2_C_secA"/>
    <property type="match status" value="1"/>
</dbReference>
<dbReference type="FunFam" id="1.10.3060.10:FF:000001">
    <property type="entry name" value="Preprotein translocase subunit SecA"/>
    <property type="match status" value="1"/>
</dbReference>
<dbReference type="FunFam" id="3.40.50.300:FF:000081">
    <property type="entry name" value="Preprotein translocase subunit SecA"/>
    <property type="match status" value="1"/>
</dbReference>
<dbReference type="FunFam" id="3.40.50.300:FF:000113">
    <property type="entry name" value="Preprotein translocase subunit SecA"/>
    <property type="match status" value="1"/>
</dbReference>
<dbReference type="FunFam" id="3.90.1440.10:FF:000001">
    <property type="entry name" value="Preprotein translocase subunit SecA"/>
    <property type="match status" value="1"/>
</dbReference>
<dbReference type="Gene3D" id="1.10.3060.10">
    <property type="entry name" value="Helical scaffold and wing domains of SecA"/>
    <property type="match status" value="1"/>
</dbReference>
<dbReference type="Gene3D" id="3.40.50.300">
    <property type="entry name" value="P-loop containing nucleotide triphosphate hydrolases"/>
    <property type="match status" value="2"/>
</dbReference>
<dbReference type="Gene3D" id="3.90.1440.10">
    <property type="entry name" value="SecA, preprotein cross-linking domain"/>
    <property type="match status" value="1"/>
</dbReference>
<dbReference type="HAMAP" id="MF_01382">
    <property type="entry name" value="SecA"/>
    <property type="match status" value="1"/>
</dbReference>
<dbReference type="InterPro" id="IPR014001">
    <property type="entry name" value="Helicase_ATP-bd"/>
</dbReference>
<dbReference type="InterPro" id="IPR001650">
    <property type="entry name" value="Helicase_C-like"/>
</dbReference>
<dbReference type="InterPro" id="IPR027417">
    <property type="entry name" value="P-loop_NTPase"/>
</dbReference>
<dbReference type="InterPro" id="IPR004027">
    <property type="entry name" value="SEC_C_motif"/>
</dbReference>
<dbReference type="InterPro" id="IPR000185">
    <property type="entry name" value="SecA"/>
</dbReference>
<dbReference type="InterPro" id="IPR020937">
    <property type="entry name" value="SecA_CS"/>
</dbReference>
<dbReference type="InterPro" id="IPR011115">
    <property type="entry name" value="SecA_DEAD"/>
</dbReference>
<dbReference type="InterPro" id="IPR014018">
    <property type="entry name" value="SecA_motor_DEAD"/>
</dbReference>
<dbReference type="InterPro" id="IPR011130">
    <property type="entry name" value="SecA_preprotein_X-link_dom"/>
</dbReference>
<dbReference type="InterPro" id="IPR044722">
    <property type="entry name" value="SecA_SF2_C"/>
</dbReference>
<dbReference type="InterPro" id="IPR011116">
    <property type="entry name" value="SecA_Wing/Scaffold"/>
</dbReference>
<dbReference type="InterPro" id="IPR036266">
    <property type="entry name" value="SecA_Wing/Scaffold_sf"/>
</dbReference>
<dbReference type="InterPro" id="IPR036670">
    <property type="entry name" value="SecA_X-link_sf"/>
</dbReference>
<dbReference type="NCBIfam" id="NF009538">
    <property type="entry name" value="PRK12904.1"/>
    <property type="match status" value="1"/>
</dbReference>
<dbReference type="NCBIfam" id="TIGR00963">
    <property type="entry name" value="secA"/>
    <property type="match status" value="1"/>
</dbReference>
<dbReference type="PANTHER" id="PTHR30612:SF0">
    <property type="entry name" value="CHLOROPLAST PROTEIN-TRANSPORTING ATPASE"/>
    <property type="match status" value="1"/>
</dbReference>
<dbReference type="PANTHER" id="PTHR30612">
    <property type="entry name" value="SECA INNER MEMBRANE COMPONENT OF SEC PROTEIN SECRETION SYSTEM"/>
    <property type="match status" value="1"/>
</dbReference>
<dbReference type="Pfam" id="PF21090">
    <property type="entry name" value="P-loop_SecA"/>
    <property type="match status" value="1"/>
</dbReference>
<dbReference type="Pfam" id="PF02810">
    <property type="entry name" value="SEC-C"/>
    <property type="match status" value="1"/>
</dbReference>
<dbReference type="Pfam" id="PF07517">
    <property type="entry name" value="SecA_DEAD"/>
    <property type="match status" value="1"/>
</dbReference>
<dbReference type="Pfam" id="PF01043">
    <property type="entry name" value="SecA_PP_bind"/>
    <property type="match status" value="1"/>
</dbReference>
<dbReference type="Pfam" id="PF07516">
    <property type="entry name" value="SecA_SW"/>
    <property type="match status" value="1"/>
</dbReference>
<dbReference type="PRINTS" id="PR00906">
    <property type="entry name" value="SECA"/>
</dbReference>
<dbReference type="SMART" id="SM00957">
    <property type="entry name" value="SecA_DEAD"/>
    <property type="match status" value="1"/>
</dbReference>
<dbReference type="SMART" id="SM00958">
    <property type="entry name" value="SecA_PP_bind"/>
    <property type="match status" value="1"/>
</dbReference>
<dbReference type="SUPFAM" id="SSF81886">
    <property type="entry name" value="Helical scaffold and wing domains of SecA"/>
    <property type="match status" value="1"/>
</dbReference>
<dbReference type="SUPFAM" id="SSF52540">
    <property type="entry name" value="P-loop containing nucleoside triphosphate hydrolases"/>
    <property type="match status" value="2"/>
</dbReference>
<dbReference type="SUPFAM" id="SSF81767">
    <property type="entry name" value="Pre-protein crosslinking domain of SecA"/>
    <property type="match status" value="1"/>
</dbReference>
<dbReference type="PROSITE" id="PS01312">
    <property type="entry name" value="SECA"/>
    <property type="match status" value="1"/>
</dbReference>
<dbReference type="PROSITE" id="PS51196">
    <property type="entry name" value="SECA_MOTOR_DEAD"/>
    <property type="match status" value="1"/>
</dbReference>
<gene>
    <name evidence="1" type="primary">secA</name>
    <name type="ordered locus">Sbal195_0421</name>
</gene>
<accession>A9KY37</accession>
<reference key="1">
    <citation type="submission" date="2007-11" db="EMBL/GenBank/DDBJ databases">
        <title>Complete sequence of chromosome of Shewanella baltica OS195.</title>
        <authorList>
            <consortium name="US DOE Joint Genome Institute"/>
            <person name="Copeland A."/>
            <person name="Lucas S."/>
            <person name="Lapidus A."/>
            <person name="Barry K."/>
            <person name="Glavina del Rio T."/>
            <person name="Dalin E."/>
            <person name="Tice H."/>
            <person name="Pitluck S."/>
            <person name="Chain P."/>
            <person name="Malfatti S."/>
            <person name="Shin M."/>
            <person name="Vergez L."/>
            <person name="Schmutz J."/>
            <person name="Larimer F."/>
            <person name="Land M."/>
            <person name="Hauser L."/>
            <person name="Kyrpides N."/>
            <person name="Kim E."/>
            <person name="Brettar I."/>
            <person name="Rodrigues J."/>
            <person name="Konstantinidis K."/>
            <person name="Klappenbach J."/>
            <person name="Hofle M."/>
            <person name="Tiedje J."/>
            <person name="Richardson P."/>
        </authorList>
    </citation>
    <scope>NUCLEOTIDE SEQUENCE [LARGE SCALE GENOMIC DNA]</scope>
    <source>
        <strain>OS195</strain>
    </source>
</reference>